<sequence>MSKSSRGGRQIVASNRKARHNYSIIEVFEAGVALQGTEVKSLREGQASLADSFATIDDGEVWLRNAHIPEYRHGSWTNHEPRRNRKLLLHRRQIDTLVGKIREGNFALVPLSLYFAEGKVKVELALARGKQARDKRQDMARRDAQREVLRELGRRAKGMT</sequence>
<keyword id="KW-0963">Cytoplasm</keyword>
<keyword id="KW-0694">RNA-binding</keyword>
<dbReference type="EMBL" id="AP010918">
    <property type="protein sequence ID" value="BAH27398.1"/>
    <property type="molecule type" value="Genomic_DNA"/>
</dbReference>
<dbReference type="RefSeq" id="WP_003416113.1">
    <property type="nucleotide sequence ID" value="NZ_CP014566.1"/>
</dbReference>
<dbReference type="SMR" id="C1AGL9"/>
<dbReference type="GeneID" id="45427099"/>
<dbReference type="KEGG" id="mbt:JTY_3120"/>
<dbReference type="HOGENOM" id="CLU_108953_2_1_11"/>
<dbReference type="GO" id="GO:0005829">
    <property type="term" value="C:cytosol"/>
    <property type="evidence" value="ECO:0007669"/>
    <property type="project" value="TreeGrafter"/>
</dbReference>
<dbReference type="GO" id="GO:0003723">
    <property type="term" value="F:RNA binding"/>
    <property type="evidence" value="ECO:0007669"/>
    <property type="project" value="UniProtKB-UniRule"/>
</dbReference>
<dbReference type="GO" id="GO:0070929">
    <property type="term" value="P:trans-translation"/>
    <property type="evidence" value="ECO:0007669"/>
    <property type="project" value="UniProtKB-UniRule"/>
</dbReference>
<dbReference type="CDD" id="cd09294">
    <property type="entry name" value="SmpB"/>
    <property type="match status" value="1"/>
</dbReference>
<dbReference type="Gene3D" id="2.40.280.10">
    <property type="match status" value="1"/>
</dbReference>
<dbReference type="HAMAP" id="MF_00023">
    <property type="entry name" value="SmpB"/>
    <property type="match status" value="1"/>
</dbReference>
<dbReference type="InterPro" id="IPR023620">
    <property type="entry name" value="SmpB"/>
</dbReference>
<dbReference type="InterPro" id="IPR000037">
    <property type="entry name" value="SsrA-bd_prot"/>
</dbReference>
<dbReference type="InterPro" id="IPR020081">
    <property type="entry name" value="SsrA-bd_prot_CS"/>
</dbReference>
<dbReference type="NCBIfam" id="NF003843">
    <property type="entry name" value="PRK05422.1"/>
    <property type="match status" value="1"/>
</dbReference>
<dbReference type="NCBIfam" id="TIGR00086">
    <property type="entry name" value="smpB"/>
    <property type="match status" value="1"/>
</dbReference>
<dbReference type="PANTHER" id="PTHR30308:SF2">
    <property type="entry name" value="SSRA-BINDING PROTEIN"/>
    <property type="match status" value="1"/>
</dbReference>
<dbReference type="PANTHER" id="PTHR30308">
    <property type="entry name" value="TMRNA-BINDING COMPONENT OF TRANS-TRANSLATION TAGGING COMPLEX"/>
    <property type="match status" value="1"/>
</dbReference>
<dbReference type="Pfam" id="PF01668">
    <property type="entry name" value="SmpB"/>
    <property type="match status" value="1"/>
</dbReference>
<dbReference type="SUPFAM" id="SSF74982">
    <property type="entry name" value="Small protein B (SmpB)"/>
    <property type="match status" value="1"/>
</dbReference>
<dbReference type="PROSITE" id="PS01317">
    <property type="entry name" value="SSRP"/>
    <property type="match status" value="1"/>
</dbReference>
<accession>C1AGL9</accession>
<proteinExistence type="inferred from homology"/>
<feature type="chain" id="PRO_1000197616" description="SsrA-binding protein">
    <location>
        <begin position="1"/>
        <end position="160"/>
    </location>
</feature>
<organism>
    <name type="scientific">Mycobacterium bovis (strain BCG / Tokyo 172 / ATCC 35737 / TMC 1019)</name>
    <dbReference type="NCBI Taxonomy" id="561275"/>
    <lineage>
        <taxon>Bacteria</taxon>
        <taxon>Bacillati</taxon>
        <taxon>Actinomycetota</taxon>
        <taxon>Actinomycetes</taxon>
        <taxon>Mycobacteriales</taxon>
        <taxon>Mycobacteriaceae</taxon>
        <taxon>Mycobacterium</taxon>
        <taxon>Mycobacterium tuberculosis complex</taxon>
    </lineage>
</organism>
<protein>
    <recommendedName>
        <fullName evidence="1">SsrA-binding protein</fullName>
    </recommendedName>
    <alternativeName>
        <fullName evidence="1">Small protein B</fullName>
    </alternativeName>
</protein>
<evidence type="ECO:0000255" key="1">
    <source>
        <dbReference type="HAMAP-Rule" id="MF_00023"/>
    </source>
</evidence>
<reference key="1">
    <citation type="journal article" date="2009" name="Vaccine">
        <title>Whole genome sequence analysis of Mycobacterium bovis bacillus Calmette-Guerin (BCG) Tokyo 172: a comparative study of BCG vaccine substrains.</title>
        <authorList>
            <person name="Seki M."/>
            <person name="Honda I."/>
            <person name="Fujita I."/>
            <person name="Yano I."/>
            <person name="Yamamoto S."/>
            <person name="Koyama A."/>
        </authorList>
    </citation>
    <scope>NUCLEOTIDE SEQUENCE [LARGE SCALE GENOMIC DNA]</scope>
    <source>
        <strain>BCG / Tokyo 172 / ATCC 35737 / TMC 1019</strain>
    </source>
</reference>
<name>SSRP_MYCBT</name>
<gene>
    <name evidence="1" type="primary">smpB</name>
    <name type="ordered locus">JTY_3120</name>
</gene>
<comment type="function">
    <text evidence="1">Required for rescue of stalled ribosomes mediated by trans-translation. Binds to transfer-messenger RNA (tmRNA), required for stable association of tmRNA with ribosomes. tmRNA and SmpB together mimic tRNA shape, replacing the anticodon stem-loop with SmpB. tmRNA is encoded by the ssrA gene; the 2 termini fold to resemble tRNA(Ala) and it encodes a 'tag peptide', a short internal open reading frame. During trans-translation Ala-aminoacylated tmRNA acts like a tRNA, entering the A-site of stalled ribosomes, displacing the stalled mRNA. The ribosome then switches to translate the ORF on the tmRNA; the nascent peptide is terminated with the 'tag peptide' encoded by the tmRNA and targeted for degradation. The ribosome is freed to recommence translation, which seems to be the essential function of trans-translation.</text>
</comment>
<comment type="subcellular location">
    <subcellularLocation>
        <location evidence="1">Cytoplasm</location>
    </subcellularLocation>
    <text evidence="1">The tmRNA-SmpB complex associates with stalled 70S ribosomes.</text>
</comment>
<comment type="similarity">
    <text evidence="1">Belongs to the SmpB family.</text>
</comment>